<evidence type="ECO:0000250" key="1">
    <source>
        <dbReference type="UniProtKB" id="A0ZZH6"/>
    </source>
</evidence>
<evidence type="ECO:0000269" key="2">
    <source>
    </source>
</evidence>
<evidence type="ECO:0000269" key="3">
    <source>
    </source>
</evidence>
<evidence type="ECO:0000303" key="4">
    <source>
    </source>
</evidence>
<evidence type="ECO:0000303" key="5">
    <source>
    </source>
</evidence>
<evidence type="ECO:0000303" key="6">
    <source>
    </source>
</evidence>
<evidence type="ECO:0000305" key="7"/>
<evidence type="ECO:0000305" key="8">
    <source>
    </source>
</evidence>
<evidence type="ECO:0000305" key="9">
    <source>
    </source>
</evidence>
<sequence>MPIINKTMLITYADSLGKNLKELNENIENYFGDAVGGVHLLPFFPSTGDRGFAPIDYHEVDSAFGDWDDVKCLGEKYYLMFDFMINHISRQSKYYKDYQEKHEASAYKDLFLNWDKFWPKNRPTQEDVDLIYKRKDRAPKQEIQFADGSVEHLWNTFGEEQIDLDVTKEVTMDFIRSTIENLAANGCDLIRLDAFAYAVKKLDTNDFFVEPEIWTLLDKVRDIAAVSGAEILPEIHEHYTIQFKIADHDYYVYDFALPMVTLYSLYSSKVDRLAKWLKMSPMKQFTTLDTHDGIGVVDVKDILTDEEITYTSNELYKVGANVNRKYSTAEYNNLDIYQINSTYYSALGDDDQKYFLARLIQAFAPGIPQVYYVGFLAGKNDLELLESTKEGRNINRHYYSSEEIAKEVKRPVVKALLNLFTYRNQSAAFDLDGRIEVETPNEATIVIERQNKDGSHIAKAEINLQDMTYRVTENDQTISFE</sequence>
<protein>
    <recommendedName>
        <fullName evidence="5">Sucrose phosphorylase</fullName>
        <ecNumber evidence="3">2.4.1.7</ecNumber>
    </recommendedName>
    <alternativeName>
        <fullName evidence="4">Glucosyltransferase-A</fullName>
        <shortName evidence="5">GTF-A</shortName>
    </alternativeName>
    <alternativeName>
        <fullName>Sucrose glucosyltransferase</fullName>
    </alternativeName>
</protein>
<proteinExistence type="evidence at protein level"/>
<name>SUCP_STRMU</name>
<feature type="initiator methionine" description="Removed" evidence="2">
    <location>
        <position position="1"/>
    </location>
</feature>
<feature type="chain" id="PRO_0000072301" description="Sucrose phosphorylase">
    <location>
        <begin position="2"/>
        <end position="481"/>
    </location>
</feature>
<feature type="active site" description="Nucleophile" evidence="1">
    <location>
        <position position="193"/>
    </location>
</feature>
<feature type="active site" description="Proton donor" evidence="1">
    <location>
        <position position="234"/>
    </location>
</feature>
<feature type="binding site" evidence="1">
    <location>
        <position position="49"/>
    </location>
    <ligand>
        <name>sucrose</name>
        <dbReference type="ChEBI" id="CHEBI:17992"/>
    </ligand>
</feature>
<feature type="binding site" evidence="1">
    <location>
        <position position="87"/>
    </location>
    <ligand>
        <name>sucrose</name>
        <dbReference type="ChEBI" id="CHEBI:17992"/>
    </ligand>
</feature>
<feature type="binding site" evidence="1">
    <location>
        <begin position="191"/>
        <end position="193"/>
    </location>
    <ligand>
        <name>sucrose</name>
        <dbReference type="ChEBI" id="CHEBI:17992"/>
    </ligand>
</feature>
<feature type="binding site" evidence="1">
    <location>
        <position position="234"/>
    </location>
    <ligand>
        <name>sucrose</name>
        <dbReference type="ChEBI" id="CHEBI:17992"/>
    </ligand>
</feature>
<feature type="binding site" evidence="1">
    <location>
        <begin position="291"/>
        <end position="292"/>
    </location>
    <ligand>
        <name>sucrose</name>
        <dbReference type="ChEBI" id="CHEBI:17992"/>
    </ligand>
</feature>
<feature type="binding site" evidence="1">
    <location>
        <begin position="335"/>
        <end position="338"/>
    </location>
    <ligand>
        <name>sucrose</name>
        <dbReference type="ChEBI" id="CHEBI:17992"/>
    </ligand>
</feature>
<feature type="binding site" evidence="1">
    <location>
        <position position="392"/>
    </location>
    <ligand>
        <name>sucrose</name>
        <dbReference type="ChEBI" id="CHEBI:17992"/>
    </ligand>
</feature>
<feature type="mutagenesis site" description="Loss of glucan synthesis." evidence="2">
    <location>
        <begin position="462"/>
        <end position="481"/>
    </location>
</feature>
<feature type="sequence conflict" description="In Ref. 1; CAA30846 and 2; AAA26937." evidence="7" ref="1 2">
    <original>IN</original>
    <variation>TI</variation>
    <location>
        <begin position="4"/>
        <end position="5"/>
    </location>
</feature>
<feature type="sequence conflict" description="In Ref. 1; CAA30846." evidence="7" ref="1">
    <original>G</original>
    <variation>A</variation>
    <location>
        <position position="32"/>
    </location>
</feature>
<feature type="sequence conflict" description="In Ref. 1; CAA30846 and 2; AAA26937." evidence="7" ref="1 2">
    <original>C</original>
    <variation>R</variation>
    <location>
        <position position="72"/>
    </location>
</feature>
<feature type="sequence conflict" description="In Ref. 2; AAA26937." evidence="7" ref="2">
    <original>D</original>
    <variation>N</variation>
    <location>
        <position position="222"/>
    </location>
</feature>
<feature type="sequence conflict" description="In Ref. 1; CAA30846 and 2; AAA26937." evidence="7" ref="1 2">
    <original>S</original>
    <variation>G</variation>
    <location>
        <position position="268"/>
    </location>
</feature>
<feature type="sequence conflict" description="In Ref. 1; CAA30846." evidence="7" ref="1">
    <original>L</original>
    <variation>V</variation>
    <location>
        <position position="277"/>
    </location>
</feature>
<feature type="sequence conflict" description="In Ref. 1; CAA30846." evidence="7" ref="1">
    <original>N</original>
    <variation>I</variation>
    <location>
        <position position="393"/>
    </location>
</feature>
<feature type="sequence conflict" description="In Ref. 1; CAA30846." evidence="7" ref="1">
    <original>N</original>
    <variation>I</variation>
    <location>
        <position position="424"/>
    </location>
</feature>
<feature type="sequence conflict" description="In Ref. 1; CAA30846." evidence="7" ref="1">
    <original>AT</original>
    <variation>EN</variation>
    <location>
        <begin position="443"/>
        <end position="444"/>
    </location>
</feature>
<feature type="sequence conflict" description="In Ref. 1; CAA30846 and 2; AAA26937." evidence="7" ref="1 2">
    <original>K</original>
    <variation>T</variation>
    <location>
        <position position="459"/>
    </location>
</feature>
<feature type="sequence conflict" description="In Ref. 1; CAA30846." evidence="7" ref="1">
    <original>FE</original>
    <variation>LSMISCQT</variation>
    <location>
        <begin position="480"/>
        <end position="481"/>
    </location>
</feature>
<gene>
    <name evidence="4 6" type="primary">gtfA</name>
    <name type="ordered locus">SMU_881</name>
</gene>
<accession>P10249</accession>
<accession>Q99064</accession>
<comment type="function">
    <text evidence="3 8">Intracellular catabolism of sucrose (PubMed:2971020). Being intracellular, probably not involved in synthesis of extracellular polysaccharides (Probable).</text>
</comment>
<comment type="catalytic activity">
    <reaction evidence="3">
        <text>sucrose + phosphate = D-fructose + alpha-D-glucose 1-phosphate</text>
        <dbReference type="Rhea" id="RHEA:24048"/>
        <dbReference type="ChEBI" id="CHEBI:17992"/>
        <dbReference type="ChEBI" id="CHEBI:37721"/>
        <dbReference type="ChEBI" id="CHEBI:43474"/>
        <dbReference type="ChEBI" id="CHEBI:58601"/>
        <dbReference type="EC" id="2.4.1.7"/>
    </reaction>
    <physiologicalReaction direction="left-to-right" evidence="3">
        <dbReference type="Rhea" id="RHEA:24049"/>
    </physiologicalReaction>
    <physiologicalReaction direction="right-to-left" evidence="3">
        <dbReference type="Rhea" id="RHEA:24050"/>
    </physiologicalReaction>
</comment>
<comment type="subcellular location">
    <subcellularLocation>
        <location evidence="9">Cytoplasm</location>
    </subcellularLocation>
</comment>
<comment type="miscellaneous">
    <text>Some earlier publications concluded that the product of the reaction of GtfA with sucrose was a glucan, because of its insolubility in ethanol.</text>
</comment>
<comment type="similarity">
    <text evidence="7">Belongs to the glycosyl hydrolase 13 family. Sucrose phosphorylase subfamily.</text>
</comment>
<dbReference type="EC" id="2.4.1.7" evidence="3"/>
<dbReference type="EMBL" id="X08057">
    <property type="protein sequence ID" value="CAA30846.1"/>
    <property type="molecule type" value="Genomic_DNA"/>
</dbReference>
<dbReference type="EMBL" id="M77351">
    <property type="protein sequence ID" value="AAA26937.1"/>
    <property type="molecule type" value="Genomic_DNA"/>
</dbReference>
<dbReference type="EMBL" id="AE014133">
    <property type="protein sequence ID" value="AAN58596.1"/>
    <property type="molecule type" value="Genomic_DNA"/>
</dbReference>
<dbReference type="PIR" id="A27626">
    <property type="entry name" value="A27626"/>
</dbReference>
<dbReference type="PIR" id="S01972">
    <property type="entry name" value="BWSOGM"/>
</dbReference>
<dbReference type="RefSeq" id="NP_721290.1">
    <property type="nucleotide sequence ID" value="NC_004350.2"/>
</dbReference>
<dbReference type="RefSeq" id="WP_002262875.1">
    <property type="nucleotide sequence ID" value="NC_004350.2"/>
</dbReference>
<dbReference type="SMR" id="P10249"/>
<dbReference type="STRING" id="210007.SMU_881"/>
<dbReference type="CAZy" id="GH13">
    <property type="family name" value="Glycoside Hydrolase Family 13"/>
</dbReference>
<dbReference type="KEGG" id="smu:SMU_881"/>
<dbReference type="PATRIC" id="fig|210007.7.peg.787"/>
<dbReference type="eggNOG" id="COG0366">
    <property type="taxonomic scope" value="Bacteria"/>
</dbReference>
<dbReference type="HOGENOM" id="CLU_021358_1_0_9"/>
<dbReference type="OrthoDB" id="9805159at2"/>
<dbReference type="PhylomeDB" id="P10249"/>
<dbReference type="SABIO-RK" id="P10249"/>
<dbReference type="Proteomes" id="UP000002512">
    <property type="component" value="Chromosome"/>
</dbReference>
<dbReference type="GO" id="GO:0005737">
    <property type="term" value="C:cytoplasm"/>
    <property type="evidence" value="ECO:0007669"/>
    <property type="project" value="UniProtKB-SubCell"/>
</dbReference>
<dbReference type="GO" id="GO:0009018">
    <property type="term" value="F:sucrose phosphorylase activity"/>
    <property type="evidence" value="ECO:0000314"/>
    <property type="project" value="CACAO"/>
</dbReference>
<dbReference type="GO" id="GO:0005975">
    <property type="term" value="P:carbohydrate metabolic process"/>
    <property type="evidence" value="ECO:0007669"/>
    <property type="project" value="InterPro"/>
</dbReference>
<dbReference type="CDD" id="cd11355">
    <property type="entry name" value="AmyAc_Sucrose_phosphorylase"/>
    <property type="match status" value="1"/>
</dbReference>
<dbReference type="FunFam" id="3.90.400.10:FF:000007">
    <property type="entry name" value="Sucrose phosphorylase"/>
    <property type="match status" value="1"/>
</dbReference>
<dbReference type="Gene3D" id="3.20.20.80">
    <property type="entry name" value="Glycosidases"/>
    <property type="match status" value="1"/>
</dbReference>
<dbReference type="Gene3D" id="3.90.400.10">
    <property type="entry name" value="Oligo-1,6-glucosidase, Domain 2"/>
    <property type="match status" value="1"/>
</dbReference>
<dbReference type="InterPro" id="IPR006047">
    <property type="entry name" value="Glyco_hydro_13_cat_dom"/>
</dbReference>
<dbReference type="InterPro" id="IPR017853">
    <property type="entry name" value="Glycoside_hydrolase_SF"/>
</dbReference>
<dbReference type="InterPro" id="IPR045857">
    <property type="entry name" value="O16G_dom_2"/>
</dbReference>
<dbReference type="InterPro" id="IPR016377">
    <property type="entry name" value="Sucrose_GGa_phosphorylase-rel"/>
</dbReference>
<dbReference type="InterPro" id="IPR022527">
    <property type="entry name" value="Sucrose_phospho"/>
</dbReference>
<dbReference type="NCBIfam" id="TIGR03852">
    <property type="entry name" value="sucrose_gtfA"/>
    <property type="match status" value="1"/>
</dbReference>
<dbReference type="PANTHER" id="PTHR38784">
    <property type="entry name" value="SUCROSE PHOSPHORYLASE"/>
    <property type="match status" value="1"/>
</dbReference>
<dbReference type="PANTHER" id="PTHR38784:SF1">
    <property type="entry name" value="SUCROSE PHOSPHORYLASE"/>
    <property type="match status" value="1"/>
</dbReference>
<dbReference type="Pfam" id="PF00128">
    <property type="entry name" value="Alpha-amylase"/>
    <property type="match status" value="1"/>
</dbReference>
<dbReference type="PIRSF" id="PIRSF003059">
    <property type="entry name" value="Sucrose_phosphorylase"/>
    <property type="match status" value="1"/>
</dbReference>
<dbReference type="SMART" id="SM00642">
    <property type="entry name" value="Aamy"/>
    <property type="match status" value="1"/>
</dbReference>
<dbReference type="SUPFAM" id="SSF51445">
    <property type="entry name" value="(Trans)glycosidases"/>
    <property type="match status" value="1"/>
</dbReference>
<reference key="1">
    <citation type="journal article" date="1988" name="Nucleic Acids Res.">
        <title>Nucleotide sequence of the gtfA gene from S. mutans GS-5.</title>
        <authorList>
            <person name="James L.C."/>
            <person name="Hughes T.A."/>
            <person name="Curtiss R. III"/>
        </authorList>
    </citation>
    <scope>NUCLEOTIDE SEQUENCE [GENOMIC DNA]</scope>
    <source>
        <strain>GS-5</strain>
    </source>
</reference>
<reference key="2">
    <citation type="journal article" date="1988" name="Infect. Immun.">
        <title>Sequence analysis of the glucosyltransferase A gene (gtfA) from Streptococcus mutans Ingbritt.</title>
        <authorList>
            <person name="Ferretti J.J."/>
            <person name="Huang T.-T."/>
            <person name="Russell R.R.B."/>
        </authorList>
    </citation>
    <scope>NUCLEOTIDE SEQUENCE [GENOMIC DNA]</scope>
    <scope>PROTEIN SEQUENCE OF 2-20</scope>
    <scope>MUTAGENESIS OF 462-ILE--GLU-481</scope>
    <source>
        <strain>Ingbritt</strain>
    </source>
</reference>
<reference key="3">
    <citation type="journal article" date="2002" name="Proc. Natl. Acad. Sci. U.S.A.">
        <title>Genome sequence of Streptococcus mutans UA159, a cariogenic dental pathogen.</title>
        <authorList>
            <person name="Ajdic D.J."/>
            <person name="McShan W.M."/>
            <person name="McLaughlin R.E."/>
            <person name="Savic G."/>
            <person name="Chang J."/>
            <person name="Carson M.B."/>
            <person name="Primeaux C."/>
            <person name="Tian R."/>
            <person name="Kenton S."/>
            <person name="Jia H.G."/>
            <person name="Lin S.P."/>
            <person name="Qian Y."/>
            <person name="Li S."/>
            <person name="Zhu H."/>
            <person name="Najar F.Z."/>
            <person name="Lai H."/>
            <person name="White J."/>
            <person name="Roe B.A."/>
            <person name="Ferretti J.J."/>
        </authorList>
    </citation>
    <scope>NUCLEOTIDE SEQUENCE [LARGE SCALE GENOMIC DNA]</scope>
    <source>
        <strain>ATCC 700610 / UA159</strain>
    </source>
</reference>
<reference key="4">
    <citation type="journal article" date="1988" name="Infect. Immun.">
        <title>Streptococcus mutans gtfA gene specifies sucrose phosphorylase.</title>
        <authorList>
            <person name="Russell R.R.B."/>
            <person name="Mukasa H."/>
            <person name="Shimamura A."/>
            <person name="Ferretti J.J."/>
        </authorList>
    </citation>
    <scope>FUNCTION</scope>
    <scope>CATALYTIC ACTIVITY</scope>
    <scope>PROBABLE SUBCELLULAR LOCATION</scope>
    <source>
        <strain>Ingbritt</strain>
    </source>
</reference>
<organism>
    <name type="scientific">Streptococcus mutans serotype c (strain ATCC 700610 / UA159)</name>
    <dbReference type="NCBI Taxonomy" id="210007"/>
    <lineage>
        <taxon>Bacteria</taxon>
        <taxon>Bacillati</taxon>
        <taxon>Bacillota</taxon>
        <taxon>Bacilli</taxon>
        <taxon>Lactobacillales</taxon>
        <taxon>Streptococcaceae</taxon>
        <taxon>Streptococcus</taxon>
    </lineage>
</organism>
<keyword id="KW-0963">Cytoplasm</keyword>
<keyword id="KW-0214">Dental caries</keyword>
<keyword id="KW-0903">Direct protein sequencing</keyword>
<keyword id="KW-0328">Glycosyltransferase</keyword>
<keyword id="KW-1185">Reference proteome</keyword>
<keyword id="KW-0808">Transferase</keyword>